<protein>
    <recommendedName>
        <fullName evidence="1">Peptidoglycan-associated lipoprotein</fullName>
        <shortName evidence="1">PAL</shortName>
    </recommendedName>
    <alternativeName>
        <fullName>Outer membrane lipoprotein Omp16 homolog</fullName>
    </alternativeName>
</protein>
<accession>Q98F85</accession>
<proteinExistence type="inferred from homology"/>
<keyword id="KW-0131">Cell cycle</keyword>
<keyword id="KW-0132">Cell division</keyword>
<keyword id="KW-0998">Cell outer membrane</keyword>
<keyword id="KW-0449">Lipoprotein</keyword>
<keyword id="KW-0472">Membrane</keyword>
<keyword id="KW-0564">Palmitate</keyword>
<keyword id="KW-0732">Signal</keyword>
<name>PAL_RHILO</name>
<evidence type="ECO:0000255" key="1">
    <source>
        <dbReference type="HAMAP-Rule" id="MF_02204"/>
    </source>
</evidence>
<comment type="function">
    <text evidence="1">Part of the Tol-Pal system, which plays a role in outer membrane invagination during cell division and is important for maintaining outer membrane integrity.</text>
</comment>
<comment type="subunit">
    <text evidence="1">The Tol-Pal system is composed of five core proteins: the inner membrane proteins TolA, TolQ and TolR, the periplasmic protein TolB and the outer membrane protein Pal. They form a network linking the inner and outer membranes and the peptidoglycan layer.</text>
</comment>
<comment type="subcellular location">
    <subcellularLocation>
        <location evidence="1">Cell outer membrane</location>
        <topology evidence="1">Lipid-anchor</topology>
    </subcellularLocation>
</comment>
<comment type="similarity">
    <text evidence="1">Belongs to the Pal lipoprotein family.</text>
</comment>
<gene>
    <name evidence="1" type="primary">pal</name>
    <name type="synonym">omp16</name>
    <name type="ordered locus">mll3887</name>
</gene>
<organism>
    <name type="scientific">Mesorhizobium japonicum (strain LMG 29417 / CECT 9101 / MAFF 303099)</name>
    <name type="common">Mesorhizobium loti (strain MAFF 303099)</name>
    <dbReference type="NCBI Taxonomy" id="266835"/>
    <lineage>
        <taxon>Bacteria</taxon>
        <taxon>Pseudomonadati</taxon>
        <taxon>Pseudomonadota</taxon>
        <taxon>Alphaproteobacteria</taxon>
        <taxon>Hyphomicrobiales</taxon>
        <taxon>Phyllobacteriaceae</taxon>
        <taxon>Mesorhizobium</taxon>
    </lineage>
</organism>
<feature type="signal peptide" evidence="1">
    <location>
        <begin position="1"/>
        <end position="24"/>
    </location>
</feature>
<feature type="chain" id="PRO_0000020132" description="Peptidoglycan-associated lipoprotein" evidence="1">
    <location>
        <begin position="25"/>
        <end position="168"/>
    </location>
</feature>
<feature type="domain" description="OmpA-like" evidence="1">
    <location>
        <begin position="50"/>
        <end position="167"/>
    </location>
</feature>
<feature type="lipid moiety-binding region" description="N-palmitoyl cysteine" evidence="1">
    <location>
        <position position="25"/>
    </location>
</feature>
<feature type="lipid moiety-binding region" description="S-diacylglycerol cysteine" evidence="1">
    <location>
        <position position="25"/>
    </location>
</feature>
<reference key="1">
    <citation type="journal article" date="2000" name="DNA Res.">
        <title>Complete genome structure of the nitrogen-fixing symbiotic bacterium Mesorhizobium loti.</title>
        <authorList>
            <person name="Kaneko T."/>
            <person name="Nakamura Y."/>
            <person name="Sato S."/>
            <person name="Asamizu E."/>
            <person name="Kato T."/>
            <person name="Sasamoto S."/>
            <person name="Watanabe A."/>
            <person name="Idesawa K."/>
            <person name="Ishikawa A."/>
            <person name="Kawashima K."/>
            <person name="Kimura T."/>
            <person name="Kishida Y."/>
            <person name="Kiyokawa C."/>
            <person name="Kohara M."/>
            <person name="Matsumoto M."/>
            <person name="Matsuno A."/>
            <person name="Mochizuki Y."/>
            <person name="Nakayama S."/>
            <person name="Nakazaki N."/>
            <person name="Shimpo S."/>
            <person name="Sugimoto M."/>
            <person name="Takeuchi C."/>
            <person name="Yamada M."/>
            <person name="Tabata S."/>
        </authorList>
    </citation>
    <scope>NUCLEOTIDE SEQUENCE [LARGE SCALE GENOMIC DNA]</scope>
    <source>
        <strain>LMG 29417 / CECT 9101 / MAFF 303099</strain>
    </source>
</reference>
<dbReference type="EMBL" id="BA000012">
    <property type="protein sequence ID" value="BAB50682.1"/>
    <property type="molecule type" value="Genomic_DNA"/>
</dbReference>
<dbReference type="RefSeq" id="WP_010912025.1">
    <property type="nucleotide sequence ID" value="NC_002678.2"/>
</dbReference>
<dbReference type="SMR" id="Q98F85"/>
<dbReference type="GeneID" id="66681537"/>
<dbReference type="KEGG" id="mlo:mll3887"/>
<dbReference type="eggNOG" id="COG2885">
    <property type="taxonomic scope" value="Bacteria"/>
</dbReference>
<dbReference type="HOGENOM" id="CLU_016890_9_2_5"/>
<dbReference type="Proteomes" id="UP000000552">
    <property type="component" value="Chromosome"/>
</dbReference>
<dbReference type="GO" id="GO:0009279">
    <property type="term" value="C:cell outer membrane"/>
    <property type="evidence" value="ECO:0007669"/>
    <property type="project" value="UniProtKB-SubCell"/>
</dbReference>
<dbReference type="GO" id="GO:0051301">
    <property type="term" value="P:cell division"/>
    <property type="evidence" value="ECO:0007669"/>
    <property type="project" value="UniProtKB-UniRule"/>
</dbReference>
<dbReference type="CDD" id="cd07185">
    <property type="entry name" value="OmpA_C-like"/>
    <property type="match status" value="1"/>
</dbReference>
<dbReference type="Gene3D" id="3.30.1330.60">
    <property type="entry name" value="OmpA-like domain"/>
    <property type="match status" value="1"/>
</dbReference>
<dbReference type="HAMAP" id="MF_02204">
    <property type="entry name" value="Pal"/>
    <property type="match status" value="1"/>
</dbReference>
<dbReference type="InterPro" id="IPR050330">
    <property type="entry name" value="Bact_OuterMem_StrucFunc"/>
</dbReference>
<dbReference type="InterPro" id="IPR006664">
    <property type="entry name" value="OMP_bac"/>
</dbReference>
<dbReference type="InterPro" id="IPR006665">
    <property type="entry name" value="OmpA-like"/>
</dbReference>
<dbReference type="InterPro" id="IPR006690">
    <property type="entry name" value="OMPA-like_CS"/>
</dbReference>
<dbReference type="InterPro" id="IPR036737">
    <property type="entry name" value="OmpA-like_sf"/>
</dbReference>
<dbReference type="InterPro" id="IPR039001">
    <property type="entry name" value="Pal"/>
</dbReference>
<dbReference type="InterPro" id="IPR014169">
    <property type="entry name" value="Pal_lipo_C"/>
</dbReference>
<dbReference type="NCBIfam" id="TIGR02802">
    <property type="entry name" value="Pal_lipo"/>
    <property type="match status" value="1"/>
</dbReference>
<dbReference type="PANTHER" id="PTHR30329:SF21">
    <property type="entry name" value="LIPOPROTEIN YIAD-RELATED"/>
    <property type="match status" value="1"/>
</dbReference>
<dbReference type="PANTHER" id="PTHR30329">
    <property type="entry name" value="STATOR ELEMENT OF FLAGELLAR MOTOR COMPLEX"/>
    <property type="match status" value="1"/>
</dbReference>
<dbReference type="Pfam" id="PF00691">
    <property type="entry name" value="OmpA"/>
    <property type="match status" value="1"/>
</dbReference>
<dbReference type="PRINTS" id="PR01021">
    <property type="entry name" value="OMPADOMAIN"/>
</dbReference>
<dbReference type="SUPFAM" id="SSF103088">
    <property type="entry name" value="OmpA-like"/>
    <property type="match status" value="1"/>
</dbReference>
<dbReference type="PROSITE" id="PS01068">
    <property type="entry name" value="OMPA_1"/>
    <property type="match status" value="1"/>
</dbReference>
<dbReference type="PROSITE" id="PS51123">
    <property type="entry name" value="OMPA_2"/>
    <property type="match status" value="1"/>
</dbReference>
<dbReference type="PROSITE" id="PS51257">
    <property type="entry name" value="PROKAR_LIPOPROTEIN"/>
    <property type="match status" value="1"/>
</dbReference>
<sequence length="168" mass="17765">MGRIAALTRNPVMIALVAMLAIAGCASKKTPNNAADLGLNGAGAATPGSAQDFTVNIGDRIFFDTDSSSIRADAQTTLARQAQWLNQYKQYAIVVEGHADERGTREYNLALGARRAAAARDFLVSKGVASSRLKTISYGKERPVAVCDDISCWSQNRRAVTTLSGAGS</sequence>